<proteinExistence type="inferred from homology"/>
<protein>
    <recommendedName>
        <fullName evidence="1">Heme A synthase</fullName>
        <shortName evidence="1">HAS</shortName>
        <ecNumber evidence="1">1.17.99.9</ecNumber>
    </recommendedName>
    <alternativeName>
        <fullName evidence="1">Cytochrome aa3-controlling protein</fullName>
    </alternativeName>
</protein>
<feature type="chain" id="PRO_0000349085" description="Heme A synthase">
    <location>
        <begin position="1"/>
        <end position="347"/>
    </location>
</feature>
<feature type="transmembrane region" description="Helical" evidence="1">
    <location>
        <begin position="17"/>
        <end position="37"/>
    </location>
</feature>
<feature type="transmembrane region" description="Helical" evidence="1">
    <location>
        <begin position="106"/>
        <end position="126"/>
    </location>
</feature>
<feature type="transmembrane region" description="Helical" evidence="1">
    <location>
        <begin position="132"/>
        <end position="152"/>
    </location>
</feature>
<feature type="transmembrane region" description="Helical" evidence="1">
    <location>
        <begin position="165"/>
        <end position="185"/>
    </location>
</feature>
<feature type="transmembrane region" description="Helical" evidence="1">
    <location>
        <begin position="202"/>
        <end position="222"/>
    </location>
</feature>
<feature type="transmembrane region" description="Helical" evidence="1">
    <location>
        <begin position="260"/>
        <end position="280"/>
    </location>
</feature>
<feature type="transmembrane region" description="Helical" evidence="1">
    <location>
        <begin position="295"/>
        <end position="315"/>
    </location>
</feature>
<feature type="transmembrane region" description="Helical" evidence="1">
    <location>
        <begin position="317"/>
        <end position="337"/>
    </location>
</feature>
<feature type="binding site" description="axial binding residue" evidence="1">
    <location>
        <position position="266"/>
    </location>
    <ligand>
        <name>heme</name>
        <dbReference type="ChEBI" id="CHEBI:30413"/>
    </ligand>
    <ligandPart>
        <name>Fe</name>
        <dbReference type="ChEBI" id="CHEBI:18248"/>
    </ligandPart>
</feature>
<feature type="binding site" description="axial binding residue" evidence="1">
    <location>
        <position position="323"/>
    </location>
    <ligand>
        <name>heme</name>
        <dbReference type="ChEBI" id="CHEBI:30413"/>
    </ligand>
    <ligandPart>
        <name>Fe</name>
        <dbReference type="ChEBI" id="CHEBI:18248"/>
    </ligandPart>
</feature>
<reference key="1">
    <citation type="journal article" date="2010" name="J. Bacteriol.">
        <title>Genome sequence of the dioxin-mineralizing bacterium Sphingomonas wittichii RW1.</title>
        <authorList>
            <person name="Miller T.R."/>
            <person name="Delcher A.L."/>
            <person name="Salzberg S.L."/>
            <person name="Saunders E."/>
            <person name="Detter J.C."/>
            <person name="Halden R.U."/>
        </authorList>
    </citation>
    <scope>NUCLEOTIDE SEQUENCE [LARGE SCALE GENOMIC DNA]</scope>
    <source>
        <strain>DSM 6014 / CCUG 31198 / JCM 15750 / NBRC 105917 / EY 4224 / RW1</strain>
    </source>
</reference>
<keyword id="KW-1003">Cell membrane</keyword>
<keyword id="KW-0350">Heme biosynthesis</keyword>
<keyword id="KW-0408">Iron</keyword>
<keyword id="KW-0472">Membrane</keyword>
<keyword id="KW-0479">Metal-binding</keyword>
<keyword id="KW-0560">Oxidoreductase</keyword>
<keyword id="KW-1185">Reference proteome</keyword>
<keyword id="KW-0812">Transmembrane</keyword>
<keyword id="KW-1133">Transmembrane helix</keyword>
<dbReference type="EC" id="1.17.99.9" evidence="1"/>
<dbReference type="EMBL" id="CP000699">
    <property type="protein sequence ID" value="ABQ70934.1"/>
    <property type="status" value="ALT_INIT"/>
    <property type="molecule type" value="Genomic_DNA"/>
</dbReference>
<dbReference type="SMR" id="A5VF68"/>
<dbReference type="STRING" id="392499.Swit_4596"/>
<dbReference type="PaxDb" id="392499-Swit_4596"/>
<dbReference type="KEGG" id="swi:Swit_4596"/>
<dbReference type="eggNOG" id="COG1612">
    <property type="taxonomic scope" value="Bacteria"/>
</dbReference>
<dbReference type="HOGENOM" id="CLU_017627_0_0_5"/>
<dbReference type="UniPathway" id="UPA00269">
    <property type="reaction ID" value="UER00713"/>
</dbReference>
<dbReference type="Proteomes" id="UP000001989">
    <property type="component" value="Chromosome"/>
</dbReference>
<dbReference type="GO" id="GO:0005886">
    <property type="term" value="C:plasma membrane"/>
    <property type="evidence" value="ECO:0007669"/>
    <property type="project" value="UniProtKB-SubCell"/>
</dbReference>
<dbReference type="GO" id="GO:0046872">
    <property type="term" value="F:metal ion binding"/>
    <property type="evidence" value="ECO:0007669"/>
    <property type="project" value="UniProtKB-KW"/>
</dbReference>
<dbReference type="GO" id="GO:0016653">
    <property type="term" value="F:oxidoreductase activity, acting on NAD(P)H, heme protein as acceptor"/>
    <property type="evidence" value="ECO:0007669"/>
    <property type="project" value="InterPro"/>
</dbReference>
<dbReference type="GO" id="GO:0006784">
    <property type="term" value="P:heme A biosynthetic process"/>
    <property type="evidence" value="ECO:0007669"/>
    <property type="project" value="UniProtKB-UniRule"/>
</dbReference>
<dbReference type="HAMAP" id="MF_01665">
    <property type="entry name" value="HemeA_synth_type2"/>
    <property type="match status" value="1"/>
</dbReference>
<dbReference type="InterPro" id="IPR003780">
    <property type="entry name" value="COX15/CtaA_fam"/>
</dbReference>
<dbReference type="InterPro" id="IPR023754">
    <property type="entry name" value="HemeA_Synthase_type2"/>
</dbReference>
<dbReference type="PANTHER" id="PTHR23289">
    <property type="entry name" value="CYTOCHROME C OXIDASE ASSEMBLY PROTEIN COX15"/>
    <property type="match status" value="1"/>
</dbReference>
<dbReference type="PANTHER" id="PTHR23289:SF2">
    <property type="entry name" value="CYTOCHROME C OXIDASE ASSEMBLY PROTEIN COX15 HOMOLOG"/>
    <property type="match status" value="1"/>
</dbReference>
<dbReference type="Pfam" id="PF02628">
    <property type="entry name" value="COX15-CtaA"/>
    <property type="match status" value="1"/>
</dbReference>
<sequence length="347" mass="37512">MSILARPAAPSPRPNALANWLLLVAVLVFAIVVVGGITRLTESGLSITEWKPVRGIVPPLNQAEWLAEFENYKRIPQYAAFNLHMTLEGFKAIYFWEYMHRLLARGIGAVLAGVMIVAWWKRAIPAGYGWRMIGIFALGGLQGAIGWWMVYSGLSVRTEVSHIRLATHLIAALLIFSALVWTVLDLRRLARDPDARPARPTALAIAAVLILAVQIMLGAFVAGLRAGYAFATWPKMGDEWFPAGGWNVAQGLANLHENPIVVQFVHRWWAWAAAIAALAVARAARKRGAVGPVHAVATLIVVQIALGIATLLTGVDIAVAVAHQAVAVLLLAALLWAGHGLDKPKVS</sequence>
<organism>
    <name type="scientific">Rhizorhabdus wittichii (strain DSM 6014 / CCUG 31198 / JCM 15750 / NBRC 105917 / EY 4224 / RW1)</name>
    <name type="common">Sphingomonas wittichii</name>
    <dbReference type="NCBI Taxonomy" id="392499"/>
    <lineage>
        <taxon>Bacteria</taxon>
        <taxon>Pseudomonadati</taxon>
        <taxon>Pseudomonadota</taxon>
        <taxon>Alphaproteobacteria</taxon>
        <taxon>Sphingomonadales</taxon>
        <taxon>Sphingomonadaceae</taxon>
        <taxon>Rhizorhabdus</taxon>
    </lineage>
</organism>
<comment type="function">
    <text evidence="1">Catalyzes the conversion of heme O to heme A by two successive hydroxylations of the methyl group at C8. The first hydroxylation forms heme I, the second hydroxylation results in an unstable dihydroxymethyl group, which spontaneously dehydrates, resulting in the formyl group of heme A.</text>
</comment>
<comment type="catalytic activity">
    <reaction evidence="1">
        <text>Fe(II)-heme o + 2 A + H2O = Fe(II)-heme a + 2 AH2</text>
        <dbReference type="Rhea" id="RHEA:63388"/>
        <dbReference type="ChEBI" id="CHEBI:13193"/>
        <dbReference type="ChEBI" id="CHEBI:15377"/>
        <dbReference type="ChEBI" id="CHEBI:17499"/>
        <dbReference type="ChEBI" id="CHEBI:60530"/>
        <dbReference type="ChEBI" id="CHEBI:61715"/>
        <dbReference type="EC" id="1.17.99.9"/>
    </reaction>
    <physiologicalReaction direction="left-to-right" evidence="1">
        <dbReference type="Rhea" id="RHEA:63389"/>
    </physiologicalReaction>
</comment>
<comment type="cofactor">
    <cofactor evidence="1">
        <name>heme b</name>
        <dbReference type="ChEBI" id="CHEBI:60344"/>
    </cofactor>
</comment>
<comment type="pathway">
    <text evidence="1">Porphyrin-containing compound metabolism; heme A biosynthesis; heme A from heme O: step 1/1.</text>
</comment>
<comment type="subunit">
    <text evidence="1">Interacts with CtaB.</text>
</comment>
<comment type="subcellular location">
    <subcellularLocation>
        <location evidence="1">Cell membrane</location>
        <topology evidence="1">Multi-pass membrane protein</topology>
    </subcellularLocation>
</comment>
<comment type="similarity">
    <text evidence="1">Belongs to the COX15/CtaA family. Type 2 subfamily.</text>
</comment>
<comment type="sequence caution" evidence="2">
    <conflict type="erroneous initiation">
        <sequence resource="EMBL-CDS" id="ABQ70934"/>
    </conflict>
</comment>
<evidence type="ECO:0000255" key="1">
    <source>
        <dbReference type="HAMAP-Rule" id="MF_01665"/>
    </source>
</evidence>
<evidence type="ECO:0000305" key="2"/>
<accession>A5VF68</accession>
<name>CTAA_RHIWR</name>
<gene>
    <name evidence="1" type="primary">ctaA</name>
    <name type="ordered locus">Swit_4596</name>
</gene>